<organism>
    <name type="scientific">Shouchella clausii (strain KSM-K16)</name>
    <name type="common">Alkalihalobacillus clausii</name>
    <dbReference type="NCBI Taxonomy" id="66692"/>
    <lineage>
        <taxon>Bacteria</taxon>
        <taxon>Bacillati</taxon>
        <taxon>Bacillota</taxon>
        <taxon>Bacilli</taxon>
        <taxon>Bacillales</taxon>
        <taxon>Bacillaceae</taxon>
        <taxon>Shouchella</taxon>
    </lineage>
</organism>
<comment type="function">
    <text evidence="1">Catalyzes the GTP-dependent ribosomal translocation step during translation elongation. During this step, the ribosome changes from the pre-translocational (PRE) to the post-translocational (POST) state as the newly formed A-site-bound peptidyl-tRNA and P-site-bound deacylated tRNA move to the P and E sites, respectively. Catalyzes the coordinated movement of the two tRNA molecules, the mRNA and conformational changes in the ribosome.</text>
</comment>
<comment type="subcellular location">
    <subcellularLocation>
        <location evidence="1">Cytoplasm</location>
    </subcellularLocation>
</comment>
<comment type="similarity">
    <text evidence="1">Belongs to the TRAFAC class translation factor GTPase superfamily. Classic translation factor GTPase family. EF-G/EF-2 subfamily.</text>
</comment>
<name>EFG_SHOC1</name>
<reference key="1">
    <citation type="submission" date="2003-10" db="EMBL/GenBank/DDBJ databases">
        <title>The complete genome sequence of the alkaliphilic Bacillus clausii KSM-K16.</title>
        <authorList>
            <person name="Takaki Y."/>
            <person name="Kageyama Y."/>
            <person name="Shimamura S."/>
            <person name="Suzuki H."/>
            <person name="Nishi S."/>
            <person name="Hatada Y."/>
            <person name="Kawai S."/>
            <person name="Ito S."/>
            <person name="Horikoshi K."/>
        </authorList>
    </citation>
    <scope>NUCLEOTIDE SEQUENCE [LARGE SCALE GENOMIC DNA]</scope>
    <source>
        <strain>KSM-K16</strain>
    </source>
</reference>
<feature type="chain" id="PRO_0000091069" description="Elongation factor G">
    <location>
        <begin position="1"/>
        <end position="692"/>
    </location>
</feature>
<feature type="domain" description="tr-type G">
    <location>
        <begin position="8"/>
        <end position="282"/>
    </location>
</feature>
<feature type="binding site" evidence="1">
    <location>
        <begin position="17"/>
        <end position="24"/>
    </location>
    <ligand>
        <name>GTP</name>
        <dbReference type="ChEBI" id="CHEBI:37565"/>
    </ligand>
</feature>
<feature type="binding site" evidence="1">
    <location>
        <begin position="81"/>
        <end position="85"/>
    </location>
    <ligand>
        <name>GTP</name>
        <dbReference type="ChEBI" id="CHEBI:37565"/>
    </ligand>
</feature>
<feature type="binding site" evidence="1">
    <location>
        <begin position="135"/>
        <end position="138"/>
    </location>
    <ligand>
        <name>GTP</name>
        <dbReference type="ChEBI" id="CHEBI:37565"/>
    </ligand>
</feature>
<gene>
    <name evidence="1" type="primary">fusA</name>
    <name type="ordered locus">ABC0147</name>
</gene>
<sequence>MAREFSLKDTRNIGIMAHIDAGKTTTTERILFYTGRVHKIGETHEGASQMDWMEQEQERGITITSAATTAQWKGHRINIIDTPGHVDFTVEVERSLRVLDGAVAVLDAQSGVEPQTETVWRQATTYGVPRIVFINKMDKTGADFMYSVSTLRDRLQANAHPIQLPIGAEDDFVGFVDLIEMQAHISKDDLGQDWEVTEVPADYKDEAESLRESLVEAVAELDEDLMMKYLEGEELTKDELKAAIRKGTCNVEFYPVVCGTAFKNKGVQALLDAVLDYLPSPLDVAAIRGQVPGTDEEVTREPGDDQPFAALAFKVMTDPFVGKLTFFRVYSGTLNSGSYVRNATKDKRERIGRILQMHANSREEISTVYSGDIAAAVGLKDTTTGDTLCDEKNLVILESMEFPEPVIHLSVEPKSKADQDKMGIALAKLAEEDPTFKTFTDEETGETVIGGMGELHLDIIVDRLRREFKVEANVGAPQVSYRETIRTAAQVEGKFVRQSGGRGQFGHVWVEFSPNEEGAGFEFENAIVGGVVPREYIPSVQAGIEEALQNGMIAGYPVIDIKAKLYDGSYHDVDSSEMAFKIAASMALKNAKSKCDPVLLEPISKVEIVVPEEYMGDIMGDVTARRGRVEGMEARGNAQVVKAFVPLAEMFGYATSLRSRTQGRGTYSMVFDHYEEVPKSIAEEIIKKQTGA</sequence>
<keyword id="KW-0963">Cytoplasm</keyword>
<keyword id="KW-0251">Elongation factor</keyword>
<keyword id="KW-0342">GTP-binding</keyword>
<keyword id="KW-0547">Nucleotide-binding</keyword>
<keyword id="KW-0648">Protein biosynthesis</keyword>
<keyword id="KW-1185">Reference proteome</keyword>
<proteinExistence type="inferred from homology"/>
<dbReference type="EMBL" id="AP006627">
    <property type="protein sequence ID" value="BAD62690.1"/>
    <property type="molecule type" value="Genomic_DNA"/>
</dbReference>
<dbReference type="RefSeq" id="WP_011245011.1">
    <property type="nucleotide sequence ID" value="NC_006582.1"/>
</dbReference>
<dbReference type="SMR" id="Q5WLR5"/>
<dbReference type="STRING" id="66692.ABC0147"/>
<dbReference type="KEGG" id="bcl:ABC0147"/>
<dbReference type="eggNOG" id="COG0480">
    <property type="taxonomic scope" value="Bacteria"/>
</dbReference>
<dbReference type="HOGENOM" id="CLU_002794_4_1_9"/>
<dbReference type="OrthoDB" id="9804431at2"/>
<dbReference type="Proteomes" id="UP000001168">
    <property type="component" value="Chromosome"/>
</dbReference>
<dbReference type="GO" id="GO:0005737">
    <property type="term" value="C:cytoplasm"/>
    <property type="evidence" value="ECO:0007669"/>
    <property type="project" value="UniProtKB-SubCell"/>
</dbReference>
<dbReference type="GO" id="GO:0005525">
    <property type="term" value="F:GTP binding"/>
    <property type="evidence" value="ECO:0007669"/>
    <property type="project" value="UniProtKB-UniRule"/>
</dbReference>
<dbReference type="GO" id="GO:0003924">
    <property type="term" value="F:GTPase activity"/>
    <property type="evidence" value="ECO:0007669"/>
    <property type="project" value="InterPro"/>
</dbReference>
<dbReference type="GO" id="GO:0003746">
    <property type="term" value="F:translation elongation factor activity"/>
    <property type="evidence" value="ECO:0007669"/>
    <property type="project" value="UniProtKB-UniRule"/>
</dbReference>
<dbReference type="GO" id="GO:0032790">
    <property type="term" value="P:ribosome disassembly"/>
    <property type="evidence" value="ECO:0007669"/>
    <property type="project" value="TreeGrafter"/>
</dbReference>
<dbReference type="CDD" id="cd01886">
    <property type="entry name" value="EF-G"/>
    <property type="match status" value="1"/>
</dbReference>
<dbReference type="CDD" id="cd16262">
    <property type="entry name" value="EFG_III"/>
    <property type="match status" value="1"/>
</dbReference>
<dbReference type="CDD" id="cd01434">
    <property type="entry name" value="EFG_mtEFG1_IV"/>
    <property type="match status" value="1"/>
</dbReference>
<dbReference type="CDD" id="cd03713">
    <property type="entry name" value="EFG_mtEFG_C"/>
    <property type="match status" value="1"/>
</dbReference>
<dbReference type="CDD" id="cd04088">
    <property type="entry name" value="EFG_mtEFG_II"/>
    <property type="match status" value="1"/>
</dbReference>
<dbReference type="FunFam" id="2.40.30.10:FF:000006">
    <property type="entry name" value="Elongation factor G"/>
    <property type="match status" value="1"/>
</dbReference>
<dbReference type="FunFam" id="3.30.230.10:FF:000003">
    <property type="entry name" value="Elongation factor G"/>
    <property type="match status" value="1"/>
</dbReference>
<dbReference type="FunFam" id="3.30.70.240:FF:000001">
    <property type="entry name" value="Elongation factor G"/>
    <property type="match status" value="1"/>
</dbReference>
<dbReference type="FunFam" id="3.30.70.870:FF:000001">
    <property type="entry name" value="Elongation factor G"/>
    <property type="match status" value="1"/>
</dbReference>
<dbReference type="FunFam" id="3.40.50.300:FF:000029">
    <property type="entry name" value="Elongation factor G"/>
    <property type="match status" value="1"/>
</dbReference>
<dbReference type="Gene3D" id="3.30.230.10">
    <property type="match status" value="1"/>
</dbReference>
<dbReference type="Gene3D" id="3.30.70.240">
    <property type="match status" value="1"/>
</dbReference>
<dbReference type="Gene3D" id="3.30.70.870">
    <property type="entry name" value="Elongation Factor G (Translational Gtpase), domain 3"/>
    <property type="match status" value="1"/>
</dbReference>
<dbReference type="Gene3D" id="3.40.50.300">
    <property type="entry name" value="P-loop containing nucleotide triphosphate hydrolases"/>
    <property type="match status" value="1"/>
</dbReference>
<dbReference type="Gene3D" id="2.40.30.10">
    <property type="entry name" value="Translation factors"/>
    <property type="match status" value="1"/>
</dbReference>
<dbReference type="HAMAP" id="MF_00054_B">
    <property type="entry name" value="EF_G_EF_2_B"/>
    <property type="match status" value="1"/>
</dbReference>
<dbReference type="InterPro" id="IPR041095">
    <property type="entry name" value="EFG_II"/>
</dbReference>
<dbReference type="InterPro" id="IPR009022">
    <property type="entry name" value="EFG_III"/>
</dbReference>
<dbReference type="InterPro" id="IPR035647">
    <property type="entry name" value="EFG_III/V"/>
</dbReference>
<dbReference type="InterPro" id="IPR047872">
    <property type="entry name" value="EFG_IV"/>
</dbReference>
<dbReference type="InterPro" id="IPR035649">
    <property type="entry name" value="EFG_V"/>
</dbReference>
<dbReference type="InterPro" id="IPR000640">
    <property type="entry name" value="EFG_V-like"/>
</dbReference>
<dbReference type="InterPro" id="IPR004161">
    <property type="entry name" value="EFTu-like_2"/>
</dbReference>
<dbReference type="InterPro" id="IPR031157">
    <property type="entry name" value="G_TR_CS"/>
</dbReference>
<dbReference type="InterPro" id="IPR027417">
    <property type="entry name" value="P-loop_NTPase"/>
</dbReference>
<dbReference type="InterPro" id="IPR020568">
    <property type="entry name" value="Ribosomal_Su5_D2-typ_SF"/>
</dbReference>
<dbReference type="InterPro" id="IPR014721">
    <property type="entry name" value="Ribsml_uS5_D2-typ_fold_subgr"/>
</dbReference>
<dbReference type="InterPro" id="IPR005225">
    <property type="entry name" value="Small_GTP-bd"/>
</dbReference>
<dbReference type="InterPro" id="IPR000795">
    <property type="entry name" value="T_Tr_GTP-bd_dom"/>
</dbReference>
<dbReference type="InterPro" id="IPR009000">
    <property type="entry name" value="Transl_B-barrel_sf"/>
</dbReference>
<dbReference type="InterPro" id="IPR004540">
    <property type="entry name" value="Transl_elong_EFG/EF2"/>
</dbReference>
<dbReference type="InterPro" id="IPR005517">
    <property type="entry name" value="Transl_elong_EFG/EF2_IV"/>
</dbReference>
<dbReference type="NCBIfam" id="TIGR00484">
    <property type="entry name" value="EF-G"/>
    <property type="match status" value="1"/>
</dbReference>
<dbReference type="NCBIfam" id="NF009379">
    <property type="entry name" value="PRK12740.1-3"/>
    <property type="match status" value="1"/>
</dbReference>
<dbReference type="NCBIfam" id="NF009381">
    <property type="entry name" value="PRK12740.1-5"/>
    <property type="match status" value="1"/>
</dbReference>
<dbReference type="NCBIfam" id="TIGR00231">
    <property type="entry name" value="small_GTP"/>
    <property type="match status" value="1"/>
</dbReference>
<dbReference type="PANTHER" id="PTHR43261:SF1">
    <property type="entry name" value="RIBOSOME-RELEASING FACTOR 2, MITOCHONDRIAL"/>
    <property type="match status" value="1"/>
</dbReference>
<dbReference type="PANTHER" id="PTHR43261">
    <property type="entry name" value="TRANSLATION ELONGATION FACTOR G-RELATED"/>
    <property type="match status" value="1"/>
</dbReference>
<dbReference type="Pfam" id="PF00679">
    <property type="entry name" value="EFG_C"/>
    <property type="match status" value="1"/>
</dbReference>
<dbReference type="Pfam" id="PF14492">
    <property type="entry name" value="EFG_III"/>
    <property type="match status" value="1"/>
</dbReference>
<dbReference type="Pfam" id="PF03764">
    <property type="entry name" value="EFG_IV"/>
    <property type="match status" value="1"/>
</dbReference>
<dbReference type="Pfam" id="PF00009">
    <property type="entry name" value="GTP_EFTU"/>
    <property type="match status" value="1"/>
</dbReference>
<dbReference type="Pfam" id="PF03144">
    <property type="entry name" value="GTP_EFTU_D2"/>
    <property type="match status" value="1"/>
</dbReference>
<dbReference type="PRINTS" id="PR00315">
    <property type="entry name" value="ELONGATNFCT"/>
</dbReference>
<dbReference type="SMART" id="SM00838">
    <property type="entry name" value="EFG_C"/>
    <property type="match status" value="1"/>
</dbReference>
<dbReference type="SMART" id="SM00889">
    <property type="entry name" value="EFG_IV"/>
    <property type="match status" value="1"/>
</dbReference>
<dbReference type="SUPFAM" id="SSF54980">
    <property type="entry name" value="EF-G C-terminal domain-like"/>
    <property type="match status" value="2"/>
</dbReference>
<dbReference type="SUPFAM" id="SSF52540">
    <property type="entry name" value="P-loop containing nucleoside triphosphate hydrolases"/>
    <property type="match status" value="1"/>
</dbReference>
<dbReference type="SUPFAM" id="SSF54211">
    <property type="entry name" value="Ribosomal protein S5 domain 2-like"/>
    <property type="match status" value="1"/>
</dbReference>
<dbReference type="SUPFAM" id="SSF50447">
    <property type="entry name" value="Translation proteins"/>
    <property type="match status" value="1"/>
</dbReference>
<dbReference type="PROSITE" id="PS00301">
    <property type="entry name" value="G_TR_1"/>
    <property type="match status" value="1"/>
</dbReference>
<dbReference type="PROSITE" id="PS51722">
    <property type="entry name" value="G_TR_2"/>
    <property type="match status" value="1"/>
</dbReference>
<evidence type="ECO:0000255" key="1">
    <source>
        <dbReference type="HAMAP-Rule" id="MF_00054"/>
    </source>
</evidence>
<protein>
    <recommendedName>
        <fullName evidence="1">Elongation factor G</fullName>
        <shortName evidence="1">EF-G</shortName>
    </recommendedName>
</protein>
<accession>Q5WLR5</accession>